<sequence>MINEDSIQLDTLLKKYYEHSIEKIVFADDNGKIIAMNDAAKDILSEEDNYSAVANAICHRCEGYTNAYDVQSCKDCFLESMQVQATNFQVFMKTKDQKVMPFTATYQLIDQDRGIHAFTLQNVSSQIEQQEKLHQQRMMRKTISAQENERKRISRELHDSVIQEMLNVDVQLRLLKYQEDTTKLLEDAENIEYIVAKLIDDIRNMSVELRPASLDDLGLEAAFKSYFKQFEENYGIKIIYTSNIKNTRFDSDIETVVYRVVQEAILNALKYADVNEINVGIRQTGRHLVAEVIDAGNGFDPSSKPKGSGLGLYGMNERAELVSGSVNIETKIGEGTNVTLNIPI</sequence>
<reference key="1">
    <citation type="journal article" date="2001" name="Lancet">
        <title>Whole genome sequencing of meticillin-resistant Staphylococcus aureus.</title>
        <authorList>
            <person name="Kuroda M."/>
            <person name="Ohta T."/>
            <person name="Uchiyama I."/>
            <person name="Baba T."/>
            <person name="Yuzawa H."/>
            <person name="Kobayashi I."/>
            <person name="Cui L."/>
            <person name="Oguchi A."/>
            <person name="Aoki K."/>
            <person name="Nagai Y."/>
            <person name="Lian J.-Q."/>
            <person name="Ito T."/>
            <person name="Kanamori M."/>
            <person name="Matsumaru H."/>
            <person name="Maruyama A."/>
            <person name="Murakami H."/>
            <person name="Hosoyama A."/>
            <person name="Mizutani-Ui Y."/>
            <person name="Takahashi N.K."/>
            <person name="Sawano T."/>
            <person name="Inoue R."/>
            <person name="Kaito C."/>
            <person name="Sekimizu K."/>
            <person name="Hirakawa H."/>
            <person name="Kuhara S."/>
            <person name="Goto S."/>
            <person name="Yabuzaki J."/>
            <person name="Kanehisa M."/>
            <person name="Yamashita A."/>
            <person name="Oshima K."/>
            <person name="Furuya K."/>
            <person name="Yoshino C."/>
            <person name="Shiba T."/>
            <person name="Hattori M."/>
            <person name="Ogasawara N."/>
            <person name="Hayashi H."/>
            <person name="Hiramatsu K."/>
        </authorList>
    </citation>
    <scope>NUCLEOTIDE SEQUENCE [LARGE SCALE GENOMIC DNA]</scope>
    <source>
        <strain>N315</strain>
    </source>
</reference>
<keyword id="KW-0004">4Fe-4S</keyword>
<keyword id="KW-0067">ATP-binding</keyword>
<keyword id="KW-0963">Cytoplasm</keyword>
<keyword id="KW-0408">Iron</keyword>
<keyword id="KW-0411">Iron-sulfur</keyword>
<keyword id="KW-0418">Kinase</keyword>
<keyword id="KW-0479">Metal-binding</keyword>
<keyword id="KW-0547">Nucleotide-binding</keyword>
<keyword id="KW-0597">Phosphoprotein</keyword>
<keyword id="KW-0808">Transferase</keyword>
<keyword id="KW-0902">Two-component regulatory system</keyword>
<protein>
    <recommendedName>
        <fullName>Oxygen sensor histidine kinase NreB</fullName>
        <ecNumber>2.7.13.3</ecNumber>
    </recommendedName>
    <alternativeName>
        <fullName>Nitrogen regulation protein B</fullName>
    </alternativeName>
</protein>
<dbReference type="EC" id="2.7.13.3"/>
<dbReference type="EMBL" id="BA000018">
    <property type="protein sequence ID" value="BAB43482.1"/>
    <property type="molecule type" value="Genomic_DNA"/>
</dbReference>
<dbReference type="PIR" id="A90040">
    <property type="entry name" value="A90040"/>
</dbReference>
<dbReference type="RefSeq" id="WP_000606546.1">
    <property type="nucleotide sequence ID" value="NC_002745.2"/>
</dbReference>
<dbReference type="SMR" id="Q99RN7"/>
<dbReference type="EnsemblBacteria" id="BAB43482">
    <property type="protein sequence ID" value="BAB43482"/>
    <property type="gene ID" value="BAB43482"/>
</dbReference>
<dbReference type="KEGG" id="sau:SA2180"/>
<dbReference type="HOGENOM" id="CLU_000445_114_0_9"/>
<dbReference type="GO" id="GO:0005737">
    <property type="term" value="C:cytoplasm"/>
    <property type="evidence" value="ECO:0007669"/>
    <property type="project" value="UniProtKB-SubCell"/>
</dbReference>
<dbReference type="GO" id="GO:0016020">
    <property type="term" value="C:membrane"/>
    <property type="evidence" value="ECO:0007669"/>
    <property type="project" value="InterPro"/>
</dbReference>
<dbReference type="GO" id="GO:0051539">
    <property type="term" value="F:4 iron, 4 sulfur cluster binding"/>
    <property type="evidence" value="ECO:0007669"/>
    <property type="project" value="UniProtKB-KW"/>
</dbReference>
<dbReference type="GO" id="GO:0005524">
    <property type="term" value="F:ATP binding"/>
    <property type="evidence" value="ECO:0007669"/>
    <property type="project" value="UniProtKB-KW"/>
</dbReference>
<dbReference type="GO" id="GO:0005506">
    <property type="term" value="F:iron ion binding"/>
    <property type="evidence" value="ECO:0007669"/>
    <property type="project" value="InterPro"/>
</dbReference>
<dbReference type="GO" id="GO:0000155">
    <property type="term" value="F:phosphorelay sensor kinase activity"/>
    <property type="evidence" value="ECO:0007669"/>
    <property type="project" value="InterPro"/>
</dbReference>
<dbReference type="GO" id="GO:0046983">
    <property type="term" value="F:protein dimerization activity"/>
    <property type="evidence" value="ECO:0007669"/>
    <property type="project" value="InterPro"/>
</dbReference>
<dbReference type="CDD" id="cd16917">
    <property type="entry name" value="HATPase_UhpB-NarQ-NarX-like"/>
    <property type="match status" value="1"/>
</dbReference>
<dbReference type="Gene3D" id="1.20.5.1930">
    <property type="match status" value="1"/>
</dbReference>
<dbReference type="Gene3D" id="3.30.565.10">
    <property type="entry name" value="Histidine kinase-like ATPase, C-terminal domain"/>
    <property type="match status" value="1"/>
</dbReference>
<dbReference type="InterPro" id="IPR036890">
    <property type="entry name" value="HATPase_C_sf"/>
</dbReference>
<dbReference type="InterPro" id="IPR005467">
    <property type="entry name" value="His_kinase_dom"/>
</dbReference>
<dbReference type="InterPro" id="IPR050482">
    <property type="entry name" value="Sensor_HK_TwoCompSys"/>
</dbReference>
<dbReference type="InterPro" id="IPR004358">
    <property type="entry name" value="Sig_transdc_His_kin-like_C"/>
</dbReference>
<dbReference type="InterPro" id="IPR011712">
    <property type="entry name" value="Sig_transdc_His_kin_sub3_dim/P"/>
</dbReference>
<dbReference type="InterPro" id="IPR017203">
    <property type="entry name" value="Sig_transdc_His_kinase_NreB"/>
</dbReference>
<dbReference type="PANTHER" id="PTHR24421">
    <property type="entry name" value="NITRATE/NITRITE SENSOR PROTEIN NARX-RELATED"/>
    <property type="match status" value="1"/>
</dbReference>
<dbReference type="PANTHER" id="PTHR24421:SF10">
    <property type="entry name" value="NITRATE_NITRITE SENSOR PROTEIN NARQ"/>
    <property type="match status" value="1"/>
</dbReference>
<dbReference type="Pfam" id="PF02518">
    <property type="entry name" value="HATPase_c"/>
    <property type="match status" value="1"/>
</dbReference>
<dbReference type="Pfam" id="PF07730">
    <property type="entry name" value="HisKA_3"/>
    <property type="match status" value="1"/>
</dbReference>
<dbReference type="PIRSF" id="PIRSF037432">
    <property type="entry name" value="STHK_NreB"/>
    <property type="match status" value="1"/>
</dbReference>
<dbReference type="PRINTS" id="PR00344">
    <property type="entry name" value="BCTRLSENSOR"/>
</dbReference>
<dbReference type="SMART" id="SM00387">
    <property type="entry name" value="HATPase_c"/>
    <property type="match status" value="1"/>
</dbReference>
<dbReference type="SUPFAM" id="SSF55874">
    <property type="entry name" value="ATPase domain of HSP90 chaperone/DNA topoisomerase II/histidine kinase"/>
    <property type="match status" value="1"/>
</dbReference>
<dbReference type="PROSITE" id="PS50109">
    <property type="entry name" value="HIS_KIN"/>
    <property type="match status" value="1"/>
</dbReference>
<name>NREB_STAAN</name>
<evidence type="ECO:0000250" key="1"/>
<evidence type="ECO:0000255" key="2"/>
<evidence type="ECO:0000255" key="3">
    <source>
        <dbReference type="PROSITE-ProRule" id="PRU00107"/>
    </source>
</evidence>
<evidence type="ECO:0000305" key="4"/>
<gene>
    <name type="primary">nreB</name>
    <name type="ordered locus">SA2180</name>
</gene>
<proteinExistence type="inferred from homology"/>
<organism>
    <name type="scientific">Staphylococcus aureus (strain N315)</name>
    <dbReference type="NCBI Taxonomy" id="158879"/>
    <lineage>
        <taxon>Bacteria</taxon>
        <taxon>Bacillati</taxon>
        <taxon>Bacillota</taxon>
        <taxon>Bacilli</taxon>
        <taxon>Bacillales</taxon>
        <taxon>Staphylococcaceae</taxon>
        <taxon>Staphylococcus</taxon>
    </lineage>
</organism>
<accession>Q99RN7</accession>
<comment type="function">
    <text evidence="1">Member of the two-component regulatory system NreB/NreC involved in the control of dissimilatory nitrate/nitrite reduction in response to oxygen. NreB functions as a direct oxygen sensor histidine kinase which is autophosphorylated, in the absence of oxygen, probably at the conserved histidine residue, and transfers its phosphate group probably to a conserved aspartate residue of NreC. NreB/NreC activates the expression of the nitrate (narGHJI) and nitrite (nir) reductase operons, as well as the putative nitrate transporter gene narT (By similarity).</text>
</comment>
<comment type="catalytic activity">
    <reaction>
        <text>ATP + protein L-histidine = ADP + protein N-phospho-L-histidine.</text>
        <dbReference type="EC" id="2.7.13.3"/>
    </reaction>
</comment>
<comment type="cofactor">
    <cofactor evidence="4">
        <name>[4Fe-4S] cluster</name>
        <dbReference type="ChEBI" id="CHEBI:49883"/>
    </cofactor>
    <text evidence="4">Binds 1 [4Fe-4S] cluster.</text>
</comment>
<comment type="subcellular location">
    <subcellularLocation>
        <location evidence="4">Cytoplasm</location>
    </subcellularLocation>
</comment>
<comment type="PTM">
    <text evidence="1">Autophosphorylated.</text>
</comment>
<feature type="chain" id="PRO_0000349333" description="Oxygen sensor histidine kinase NreB">
    <location>
        <begin position="1"/>
        <end position="344"/>
    </location>
</feature>
<feature type="domain" description="Histidine kinase" evidence="3">
    <location>
        <begin position="152"/>
        <end position="344"/>
    </location>
</feature>
<feature type="binding site" evidence="2">
    <location>
        <position position="58"/>
    </location>
    <ligand>
        <name>[4Fe-4S] cluster</name>
        <dbReference type="ChEBI" id="CHEBI:49883"/>
    </ligand>
</feature>
<feature type="binding site" evidence="2">
    <location>
        <position position="61"/>
    </location>
    <ligand>
        <name>[4Fe-4S] cluster</name>
        <dbReference type="ChEBI" id="CHEBI:49883"/>
    </ligand>
</feature>
<feature type="binding site" evidence="2">
    <location>
        <position position="73"/>
    </location>
    <ligand>
        <name>[4Fe-4S] cluster</name>
        <dbReference type="ChEBI" id="CHEBI:49883"/>
    </ligand>
</feature>
<feature type="binding site" evidence="2">
    <location>
        <position position="76"/>
    </location>
    <ligand>
        <name>[4Fe-4S] cluster</name>
        <dbReference type="ChEBI" id="CHEBI:49883"/>
    </ligand>
</feature>
<feature type="modified residue" description="Phosphohistidine; by autocatalysis" evidence="3">
    <location>
        <position position="158"/>
    </location>
</feature>